<keyword id="KW-0560">Oxidoreductase</keyword>
<feature type="chain" id="PRO_1000068358" description="Peptide methionine sulfoxide reductase MsrA">
    <location>
        <begin position="1"/>
        <end position="213"/>
    </location>
</feature>
<feature type="active site" evidence="1">
    <location>
        <position position="53"/>
    </location>
</feature>
<name>MSRA_SERP5</name>
<proteinExistence type="inferred from homology"/>
<organism>
    <name type="scientific">Serratia proteamaculans (strain 568)</name>
    <dbReference type="NCBI Taxonomy" id="399741"/>
    <lineage>
        <taxon>Bacteria</taxon>
        <taxon>Pseudomonadati</taxon>
        <taxon>Pseudomonadota</taxon>
        <taxon>Gammaproteobacteria</taxon>
        <taxon>Enterobacterales</taxon>
        <taxon>Yersiniaceae</taxon>
        <taxon>Serratia</taxon>
    </lineage>
</organism>
<accession>A8G8X6</accession>
<protein>
    <recommendedName>
        <fullName evidence="1">Peptide methionine sulfoxide reductase MsrA</fullName>
        <shortName evidence="1">Protein-methionine-S-oxide reductase</shortName>
        <ecNumber evidence="1">1.8.4.11</ecNumber>
    </recommendedName>
    <alternativeName>
        <fullName evidence="1">Peptide-methionine (S)-S-oxide reductase</fullName>
        <shortName evidence="1">Peptide Met(O) reductase</shortName>
    </alternativeName>
</protein>
<dbReference type="EC" id="1.8.4.11" evidence="1"/>
<dbReference type="EMBL" id="CP000826">
    <property type="protein sequence ID" value="ABV39566.1"/>
    <property type="molecule type" value="Genomic_DNA"/>
</dbReference>
<dbReference type="SMR" id="A8G8X6"/>
<dbReference type="STRING" id="399741.Spro_0458"/>
<dbReference type="KEGG" id="spe:Spro_0458"/>
<dbReference type="eggNOG" id="COG0225">
    <property type="taxonomic scope" value="Bacteria"/>
</dbReference>
<dbReference type="HOGENOM" id="CLU_031040_10_3_6"/>
<dbReference type="GO" id="GO:0005737">
    <property type="term" value="C:cytoplasm"/>
    <property type="evidence" value="ECO:0007669"/>
    <property type="project" value="TreeGrafter"/>
</dbReference>
<dbReference type="GO" id="GO:0036456">
    <property type="term" value="F:L-methionine-(S)-S-oxide reductase activity"/>
    <property type="evidence" value="ECO:0007669"/>
    <property type="project" value="TreeGrafter"/>
</dbReference>
<dbReference type="GO" id="GO:0008113">
    <property type="term" value="F:peptide-methionine (S)-S-oxide reductase activity"/>
    <property type="evidence" value="ECO:0007669"/>
    <property type="project" value="UniProtKB-UniRule"/>
</dbReference>
<dbReference type="GO" id="GO:0034599">
    <property type="term" value="P:cellular response to oxidative stress"/>
    <property type="evidence" value="ECO:0007669"/>
    <property type="project" value="TreeGrafter"/>
</dbReference>
<dbReference type="GO" id="GO:0036211">
    <property type="term" value="P:protein modification process"/>
    <property type="evidence" value="ECO:0007669"/>
    <property type="project" value="UniProtKB-UniRule"/>
</dbReference>
<dbReference type="FunFam" id="3.30.1060.10:FF:000001">
    <property type="entry name" value="Peptide methionine sulfoxide reductase MsrA"/>
    <property type="match status" value="1"/>
</dbReference>
<dbReference type="Gene3D" id="3.30.1060.10">
    <property type="entry name" value="Peptide methionine sulphoxide reductase MsrA"/>
    <property type="match status" value="1"/>
</dbReference>
<dbReference type="HAMAP" id="MF_01401">
    <property type="entry name" value="MsrA"/>
    <property type="match status" value="1"/>
</dbReference>
<dbReference type="InterPro" id="IPR002569">
    <property type="entry name" value="Met_Sox_Rdtase_MsrA_dom"/>
</dbReference>
<dbReference type="InterPro" id="IPR036509">
    <property type="entry name" value="Met_Sox_Rdtase_MsrA_sf"/>
</dbReference>
<dbReference type="InterPro" id="IPR050162">
    <property type="entry name" value="MsrA_MetSO_reductase"/>
</dbReference>
<dbReference type="NCBIfam" id="TIGR00401">
    <property type="entry name" value="msrA"/>
    <property type="match status" value="1"/>
</dbReference>
<dbReference type="PANTHER" id="PTHR42799">
    <property type="entry name" value="MITOCHONDRIAL PEPTIDE METHIONINE SULFOXIDE REDUCTASE"/>
    <property type="match status" value="1"/>
</dbReference>
<dbReference type="PANTHER" id="PTHR42799:SF2">
    <property type="entry name" value="MITOCHONDRIAL PEPTIDE METHIONINE SULFOXIDE REDUCTASE"/>
    <property type="match status" value="1"/>
</dbReference>
<dbReference type="Pfam" id="PF01625">
    <property type="entry name" value="PMSR"/>
    <property type="match status" value="1"/>
</dbReference>
<dbReference type="SUPFAM" id="SSF55068">
    <property type="entry name" value="Peptide methionine sulfoxide reductase"/>
    <property type="match status" value="1"/>
</dbReference>
<evidence type="ECO:0000255" key="1">
    <source>
        <dbReference type="HAMAP-Rule" id="MF_01401"/>
    </source>
</evidence>
<gene>
    <name evidence="1" type="primary">msrA</name>
    <name type="ordered locus">Spro_0458</name>
</gene>
<sequence>MVPFFDKTQTVDQANALPGRTTPMPVATLNVVTDHSMTQVPDGLEVAIFAMGCFWGVERLFWQQQGVYSTAAGYSGGYTPNPTYREVCSGQTGHTEVVRVVFDPKIISYKQLLQVFWENHDPAQGMRQGGDVGTQYRSAIYTLTPEQQTEAESSLQRFQQAMEQAGDKRAITTEVAPALPFYYAEDDHQQYLYKNPEGYCGLGGIGVCLPPQG</sequence>
<reference key="1">
    <citation type="submission" date="2007-09" db="EMBL/GenBank/DDBJ databases">
        <title>Complete sequence of chromosome of Serratia proteamaculans 568.</title>
        <authorList>
            <consortium name="US DOE Joint Genome Institute"/>
            <person name="Copeland A."/>
            <person name="Lucas S."/>
            <person name="Lapidus A."/>
            <person name="Barry K."/>
            <person name="Glavina del Rio T."/>
            <person name="Dalin E."/>
            <person name="Tice H."/>
            <person name="Pitluck S."/>
            <person name="Chain P."/>
            <person name="Malfatti S."/>
            <person name="Shin M."/>
            <person name="Vergez L."/>
            <person name="Schmutz J."/>
            <person name="Larimer F."/>
            <person name="Land M."/>
            <person name="Hauser L."/>
            <person name="Kyrpides N."/>
            <person name="Kim E."/>
            <person name="Taghavi S."/>
            <person name="Newman L."/>
            <person name="Vangronsveld J."/>
            <person name="van der Lelie D."/>
            <person name="Richardson P."/>
        </authorList>
    </citation>
    <scope>NUCLEOTIDE SEQUENCE [LARGE SCALE GENOMIC DNA]</scope>
    <source>
        <strain>568</strain>
    </source>
</reference>
<comment type="function">
    <text evidence="1">Has an important function as a repair enzyme for proteins that have been inactivated by oxidation. Catalyzes the reversible oxidation-reduction of methionine sulfoxide in proteins to methionine.</text>
</comment>
<comment type="catalytic activity">
    <reaction evidence="1">
        <text>L-methionyl-[protein] + [thioredoxin]-disulfide + H2O = L-methionyl-(S)-S-oxide-[protein] + [thioredoxin]-dithiol</text>
        <dbReference type="Rhea" id="RHEA:14217"/>
        <dbReference type="Rhea" id="RHEA-COMP:10698"/>
        <dbReference type="Rhea" id="RHEA-COMP:10700"/>
        <dbReference type="Rhea" id="RHEA-COMP:12313"/>
        <dbReference type="Rhea" id="RHEA-COMP:12315"/>
        <dbReference type="ChEBI" id="CHEBI:15377"/>
        <dbReference type="ChEBI" id="CHEBI:16044"/>
        <dbReference type="ChEBI" id="CHEBI:29950"/>
        <dbReference type="ChEBI" id="CHEBI:44120"/>
        <dbReference type="ChEBI" id="CHEBI:50058"/>
        <dbReference type="EC" id="1.8.4.11"/>
    </reaction>
</comment>
<comment type="catalytic activity">
    <reaction evidence="1">
        <text>[thioredoxin]-disulfide + L-methionine + H2O = L-methionine (S)-S-oxide + [thioredoxin]-dithiol</text>
        <dbReference type="Rhea" id="RHEA:19993"/>
        <dbReference type="Rhea" id="RHEA-COMP:10698"/>
        <dbReference type="Rhea" id="RHEA-COMP:10700"/>
        <dbReference type="ChEBI" id="CHEBI:15377"/>
        <dbReference type="ChEBI" id="CHEBI:29950"/>
        <dbReference type="ChEBI" id="CHEBI:50058"/>
        <dbReference type="ChEBI" id="CHEBI:57844"/>
        <dbReference type="ChEBI" id="CHEBI:58772"/>
        <dbReference type="EC" id="1.8.4.11"/>
    </reaction>
</comment>
<comment type="similarity">
    <text evidence="1">Belongs to the MsrA Met sulfoxide reductase family.</text>
</comment>